<gene>
    <name evidence="1" type="primary">rps8</name>
    <name type="ordered locus">Mbar_A0095</name>
</gene>
<dbReference type="EMBL" id="CP000099">
    <property type="protein sequence ID" value="AAZ69082.1"/>
    <property type="molecule type" value="Genomic_DNA"/>
</dbReference>
<dbReference type="SMR" id="Q46GB0"/>
<dbReference type="STRING" id="269797.Mbar_A0095"/>
<dbReference type="PaxDb" id="269797-Mbar_A0095"/>
<dbReference type="KEGG" id="mba:Mbar_A0095"/>
<dbReference type="eggNOG" id="arCOG04091">
    <property type="taxonomic scope" value="Archaea"/>
</dbReference>
<dbReference type="HOGENOM" id="CLU_098428_1_1_2"/>
<dbReference type="OrthoDB" id="5670at2157"/>
<dbReference type="GO" id="GO:1990904">
    <property type="term" value="C:ribonucleoprotein complex"/>
    <property type="evidence" value="ECO:0007669"/>
    <property type="project" value="UniProtKB-KW"/>
</dbReference>
<dbReference type="GO" id="GO:0005840">
    <property type="term" value="C:ribosome"/>
    <property type="evidence" value="ECO:0007669"/>
    <property type="project" value="UniProtKB-KW"/>
</dbReference>
<dbReference type="GO" id="GO:0019843">
    <property type="term" value="F:rRNA binding"/>
    <property type="evidence" value="ECO:0007669"/>
    <property type="project" value="UniProtKB-UniRule"/>
</dbReference>
<dbReference type="GO" id="GO:0003735">
    <property type="term" value="F:structural constituent of ribosome"/>
    <property type="evidence" value="ECO:0007669"/>
    <property type="project" value="InterPro"/>
</dbReference>
<dbReference type="GO" id="GO:0006412">
    <property type="term" value="P:translation"/>
    <property type="evidence" value="ECO:0007669"/>
    <property type="project" value="UniProtKB-UniRule"/>
</dbReference>
<dbReference type="FunFam" id="3.30.1370.30:FF:000001">
    <property type="entry name" value="40S ribosomal protein S15a"/>
    <property type="match status" value="1"/>
</dbReference>
<dbReference type="FunFam" id="3.30.1490.10:FF:000002">
    <property type="entry name" value="40S ribosomal protein S15a"/>
    <property type="match status" value="1"/>
</dbReference>
<dbReference type="Gene3D" id="3.30.1370.30">
    <property type="match status" value="1"/>
</dbReference>
<dbReference type="Gene3D" id="3.30.1490.10">
    <property type="match status" value="1"/>
</dbReference>
<dbReference type="HAMAP" id="MF_01302_A">
    <property type="entry name" value="Ribosomal_uS8_A"/>
    <property type="match status" value="1"/>
</dbReference>
<dbReference type="InterPro" id="IPR000630">
    <property type="entry name" value="Ribosomal_uS8"/>
</dbReference>
<dbReference type="InterPro" id="IPR047863">
    <property type="entry name" value="Ribosomal_uS8_CS"/>
</dbReference>
<dbReference type="InterPro" id="IPR035987">
    <property type="entry name" value="Ribosomal_uS8_sf"/>
</dbReference>
<dbReference type="NCBIfam" id="NF003115">
    <property type="entry name" value="PRK04034.1"/>
    <property type="match status" value="1"/>
</dbReference>
<dbReference type="PANTHER" id="PTHR11758">
    <property type="entry name" value="40S RIBOSOMAL PROTEIN S15A"/>
    <property type="match status" value="1"/>
</dbReference>
<dbReference type="Pfam" id="PF00410">
    <property type="entry name" value="Ribosomal_S8"/>
    <property type="match status" value="1"/>
</dbReference>
<dbReference type="SUPFAM" id="SSF56047">
    <property type="entry name" value="Ribosomal protein S8"/>
    <property type="match status" value="1"/>
</dbReference>
<dbReference type="PROSITE" id="PS00053">
    <property type="entry name" value="RIBOSOMAL_S8"/>
    <property type="match status" value="1"/>
</dbReference>
<feature type="chain" id="PRO_0000225902" description="Small ribosomal subunit protein uS8">
    <location>
        <begin position="1"/>
        <end position="130"/>
    </location>
</feature>
<evidence type="ECO:0000255" key="1">
    <source>
        <dbReference type="HAMAP-Rule" id="MF_01302"/>
    </source>
</evidence>
<evidence type="ECO:0000305" key="2"/>
<organism>
    <name type="scientific">Methanosarcina barkeri (strain Fusaro / DSM 804)</name>
    <dbReference type="NCBI Taxonomy" id="269797"/>
    <lineage>
        <taxon>Archaea</taxon>
        <taxon>Methanobacteriati</taxon>
        <taxon>Methanobacteriota</taxon>
        <taxon>Stenosarchaea group</taxon>
        <taxon>Methanomicrobia</taxon>
        <taxon>Methanosarcinales</taxon>
        <taxon>Methanosarcinaceae</taxon>
        <taxon>Methanosarcina</taxon>
    </lineage>
</organism>
<reference key="1">
    <citation type="journal article" date="2006" name="J. Bacteriol.">
        <title>The Methanosarcina barkeri genome: comparative analysis with Methanosarcina acetivorans and Methanosarcina mazei reveals extensive rearrangement within methanosarcinal genomes.</title>
        <authorList>
            <person name="Maeder D.L."/>
            <person name="Anderson I."/>
            <person name="Brettin T.S."/>
            <person name="Bruce D.C."/>
            <person name="Gilna P."/>
            <person name="Han C.S."/>
            <person name="Lapidus A."/>
            <person name="Metcalf W.W."/>
            <person name="Saunders E."/>
            <person name="Tapia R."/>
            <person name="Sowers K.R."/>
        </authorList>
    </citation>
    <scope>NUCLEOTIDE SEQUENCE [LARGE SCALE GENOMIC DNA]</scope>
    <source>
        <strain>Fusaro / DSM 804</strain>
    </source>
</reference>
<proteinExistence type="inferred from homology"/>
<accession>Q46GB0</accession>
<comment type="function">
    <text evidence="1">One of the primary rRNA binding proteins, it binds directly to 16S rRNA central domain where it helps coordinate assembly of the platform of the 30S subunit.</text>
</comment>
<comment type="subunit">
    <text evidence="1">Part of the 30S ribosomal subunit.</text>
</comment>
<comment type="similarity">
    <text evidence="1">Belongs to the universal ribosomal protein uS8 family.</text>
</comment>
<keyword id="KW-0687">Ribonucleoprotein</keyword>
<keyword id="KW-0689">Ribosomal protein</keyword>
<keyword id="KW-0694">RNA-binding</keyword>
<keyword id="KW-0699">rRNA-binding</keyword>
<protein>
    <recommendedName>
        <fullName evidence="1">Small ribosomal subunit protein uS8</fullName>
    </recommendedName>
    <alternativeName>
        <fullName evidence="2">30S ribosomal protein S8</fullName>
    </alternativeName>
</protein>
<sequence length="130" mass="14111">MVLLDPLANALSTIKNAEAIGKSSCIIRPASKNIGNVLKVMQDLGYIGEFEFIDDGKAGIYSVTLVGRVNKCGAIKPRYSVGTGSFERWEKQFLPAKNFGALIITTSSGVMSQYEAREKKIGGQLLAYVY</sequence>
<name>RS8_METBF</name>